<sequence>MTQVTFKHNPVTLVGTERKVGDKAPNFTVVNRDLEEVTLHDYDGKVRLISVVPSIDTSVCSTQTRKFNEEASNLDNTVVLTISVDLPFAQKKWCAAEGLPNAITLSDHRDLSFGEAYGVIMKELRLLARSVFVVNAKGEIVYTEVVPEGSDHPNYEAAIEAAKKA</sequence>
<keyword id="KW-0049">Antioxidant</keyword>
<keyword id="KW-1015">Disulfide bond</keyword>
<keyword id="KW-0560">Oxidoreductase</keyword>
<keyword id="KW-0575">Peroxidase</keyword>
<keyword id="KW-0676">Redox-active center</keyword>
<proteinExistence type="inferred from homology"/>
<organism>
    <name type="scientific">Listeria innocua serovar 6a (strain ATCC BAA-680 / CLIP 11262)</name>
    <dbReference type="NCBI Taxonomy" id="272626"/>
    <lineage>
        <taxon>Bacteria</taxon>
        <taxon>Bacillati</taxon>
        <taxon>Bacillota</taxon>
        <taxon>Bacilli</taxon>
        <taxon>Bacillales</taxon>
        <taxon>Listeriaceae</taxon>
        <taxon>Listeria</taxon>
    </lineage>
</organism>
<feature type="chain" id="PRO_0000187885" description="Thiol peroxidase">
    <location>
        <begin position="1"/>
        <end position="165"/>
    </location>
</feature>
<feature type="domain" description="Thioredoxin" evidence="1">
    <location>
        <begin position="18"/>
        <end position="164"/>
    </location>
</feature>
<feature type="active site" description="Cysteine sulfenic acid (-SOH) intermediate" evidence="1">
    <location>
        <position position="60"/>
    </location>
</feature>
<feature type="disulfide bond" description="Redox-active" evidence="1">
    <location>
        <begin position="60"/>
        <end position="94"/>
    </location>
</feature>
<gene>
    <name evidence="1" type="primary">tpx</name>
    <name type="ordered locus">lin1625</name>
</gene>
<reference key="1">
    <citation type="journal article" date="2001" name="Science">
        <title>Comparative genomics of Listeria species.</title>
        <authorList>
            <person name="Glaser P."/>
            <person name="Frangeul L."/>
            <person name="Buchrieser C."/>
            <person name="Rusniok C."/>
            <person name="Amend A."/>
            <person name="Baquero F."/>
            <person name="Berche P."/>
            <person name="Bloecker H."/>
            <person name="Brandt P."/>
            <person name="Chakraborty T."/>
            <person name="Charbit A."/>
            <person name="Chetouani F."/>
            <person name="Couve E."/>
            <person name="de Daruvar A."/>
            <person name="Dehoux P."/>
            <person name="Domann E."/>
            <person name="Dominguez-Bernal G."/>
            <person name="Duchaud E."/>
            <person name="Durant L."/>
            <person name="Dussurget O."/>
            <person name="Entian K.-D."/>
            <person name="Fsihi H."/>
            <person name="Garcia-del Portillo F."/>
            <person name="Garrido P."/>
            <person name="Gautier L."/>
            <person name="Goebel W."/>
            <person name="Gomez-Lopez N."/>
            <person name="Hain T."/>
            <person name="Hauf J."/>
            <person name="Jackson D."/>
            <person name="Jones L.-M."/>
            <person name="Kaerst U."/>
            <person name="Kreft J."/>
            <person name="Kuhn M."/>
            <person name="Kunst F."/>
            <person name="Kurapkat G."/>
            <person name="Madueno E."/>
            <person name="Maitournam A."/>
            <person name="Mata Vicente J."/>
            <person name="Ng E."/>
            <person name="Nedjari H."/>
            <person name="Nordsiek G."/>
            <person name="Novella S."/>
            <person name="de Pablos B."/>
            <person name="Perez-Diaz J.-C."/>
            <person name="Purcell R."/>
            <person name="Remmel B."/>
            <person name="Rose M."/>
            <person name="Schlueter T."/>
            <person name="Simoes N."/>
            <person name="Tierrez A."/>
            <person name="Vazquez-Boland J.-A."/>
            <person name="Voss H."/>
            <person name="Wehland J."/>
            <person name="Cossart P."/>
        </authorList>
    </citation>
    <scope>NUCLEOTIDE SEQUENCE [LARGE SCALE GENOMIC DNA]</scope>
    <source>
        <strain>ATCC BAA-680 / CLIP 11262</strain>
    </source>
</reference>
<comment type="function">
    <text evidence="1">Thiol-specific peroxidase that catalyzes the reduction of hydrogen peroxide and organic hydroperoxides to water and alcohols, respectively. Plays a role in cell protection against oxidative stress by detoxifying peroxides.</text>
</comment>
<comment type="catalytic activity">
    <reaction evidence="1">
        <text>a hydroperoxide + [thioredoxin]-dithiol = an alcohol + [thioredoxin]-disulfide + H2O</text>
        <dbReference type="Rhea" id="RHEA:62620"/>
        <dbReference type="Rhea" id="RHEA-COMP:10698"/>
        <dbReference type="Rhea" id="RHEA-COMP:10700"/>
        <dbReference type="ChEBI" id="CHEBI:15377"/>
        <dbReference type="ChEBI" id="CHEBI:29950"/>
        <dbReference type="ChEBI" id="CHEBI:30879"/>
        <dbReference type="ChEBI" id="CHEBI:35924"/>
        <dbReference type="ChEBI" id="CHEBI:50058"/>
        <dbReference type="EC" id="1.11.1.24"/>
    </reaction>
</comment>
<comment type="subunit">
    <text evidence="1">Homodimer.</text>
</comment>
<comment type="miscellaneous">
    <text evidence="1">The active site is a conserved redox-active cysteine residue, the peroxidatic cysteine (C(P)), which makes the nucleophilic attack on the peroxide substrate. The peroxide oxidizes the C(P)-SH to cysteine sulfenic acid (C(P)-SOH), which then reacts with another cysteine residue, the resolving cysteine (C(R)), to form a disulfide bridge. The disulfide is subsequently reduced by an appropriate electron donor to complete the catalytic cycle. In this atypical 2-Cys peroxiredoxin, C(R) is present in the same subunit to form an intramolecular disulfide. The disulfide is subsequently reduced by thioredoxin.</text>
</comment>
<comment type="similarity">
    <text evidence="1">Belongs to the peroxiredoxin family. Tpx subfamily.</text>
</comment>
<name>TPX_LISIN</name>
<dbReference type="EC" id="1.11.1.24" evidence="1"/>
<dbReference type="EMBL" id="AL596169">
    <property type="protein sequence ID" value="CAC96856.1"/>
    <property type="molecule type" value="Genomic_DNA"/>
</dbReference>
<dbReference type="PIR" id="AH1635">
    <property type="entry name" value="AH1635"/>
</dbReference>
<dbReference type="RefSeq" id="WP_003772024.1">
    <property type="nucleotide sequence ID" value="NC_003212.1"/>
</dbReference>
<dbReference type="SMR" id="Q92BC5"/>
<dbReference type="STRING" id="272626.gene:17565956"/>
<dbReference type="GeneID" id="93235007"/>
<dbReference type="KEGG" id="lin:lin1625"/>
<dbReference type="eggNOG" id="COG2077">
    <property type="taxonomic scope" value="Bacteria"/>
</dbReference>
<dbReference type="HOGENOM" id="CLU_042529_12_0_9"/>
<dbReference type="OrthoDB" id="9781543at2"/>
<dbReference type="Proteomes" id="UP000002513">
    <property type="component" value="Chromosome"/>
</dbReference>
<dbReference type="GO" id="GO:0008379">
    <property type="term" value="F:thioredoxin peroxidase activity"/>
    <property type="evidence" value="ECO:0007669"/>
    <property type="project" value="UniProtKB-UniRule"/>
</dbReference>
<dbReference type="CDD" id="cd03014">
    <property type="entry name" value="PRX_Atyp2cys"/>
    <property type="match status" value="1"/>
</dbReference>
<dbReference type="Gene3D" id="3.40.30.10">
    <property type="entry name" value="Glutaredoxin"/>
    <property type="match status" value="1"/>
</dbReference>
<dbReference type="HAMAP" id="MF_00269">
    <property type="entry name" value="Tpx"/>
    <property type="match status" value="1"/>
</dbReference>
<dbReference type="InterPro" id="IPR013740">
    <property type="entry name" value="Redoxin"/>
</dbReference>
<dbReference type="InterPro" id="IPR036249">
    <property type="entry name" value="Thioredoxin-like_sf"/>
</dbReference>
<dbReference type="InterPro" id="IPR013766">
    <property type="entry name" value="Thioredoxin_domain"/>
</dbReference>
<dbReference type="InterPro" id="IPR002065">
    <property type="entry name" value="TPX"/>
</dbReference>
<dbReference type="InterPro" id="IPR018219">
    <property type="entry name" value="Tpx_CS"/>
</dbReference>
<dbReference type="InterPro" id="IPR050455">
    <property type="entry name" value="Tpx_Peroxidase_subfamily"/>
</dbReference>
<dbReference type="NCBIfam" id="NF001808">
    <property type="entry name" value="PRK00522.1"/>
    <property type="match status" value="1"/>
</dbReference>
<dbReference type="PANTHER" id="PTHR43110">
    <property type="entry name" value="THIOL PEROXIDASE"/>
    <property type="match status" value="1"/>
</dbReference>
<dbReference type="PANTHER" id="PTHR43110:SF1">
    <property type="entry name" value="THIOL PEROXIDASE"/>
    <property type="match status" value="1"/>
</dbReference>
<dbReference type="Pfam" id="PF08534">
    <property type="entry name" value="Redoxin"/>
    <property type="match status" value="1"/>
</dbReference>
<dbReference type="SUPFAM" id="SSF52833">
    <property type="entry name" value="Thioredoxin-like"/>
    <property type="match status" value="1"/>
</dbReference>
<dbReference type="PROSITE" id="PS51352">
    <property type="entry name" value="THIOREDOXIN_2"/>
    <property type="match status" value="1"/>
</dbReference>
<dbReference type="PROSITE" id="PS01265">
    <property type="entry name" value="TPX"/>
    <property type="match status" value="1"/>
</dbReference>
<protein>
    <recommendedName>
        <fullName evidence="1">Thiol peroxidase</fullName>
        <shortName evidence="1">Tpx</shortName>
        <ecNumber evidence="1">1.11.1.24</ecNumber>
    </recommendedName>
    <alternativeName>
        <fullName evidence="1">Peroxiredoxin tpx</fullName>
        <shortName evidence="1">Prx</shortName>
    </alternativeName>
    <alternativeName>
        <fullName evidence="1">Thioredoxin peroxidase</fullName>
    </alternativeName>
    <alternativeName>
        <fullName evidence="1">Thioredoxin-dependent peroxiredoxin</fullName>
    </alternativeName>
</protein>
<accession>Q92BC5</accession>
<evidence type="ECO:0000255" key="1">
    <source>
        <dbReference type="HAMAP-Rule" id="MF_00269"/>
    </source>
</evidence>